<feature type="chain" id="PRO_1000128378" description="Small ribosomal subunit protein uS14">
    <location>
        <begin position="1"/>
        <end position="101"/>
    </location>
</feature>
<name>RS14_DELAS</name>
<keyword id="KW-1185">Reference proteome</keyword>
<keyword id="KW-0687">Ribonucleoprotein</keyword>
<keyword id="KW-0689">Ribosomal protein</keyword>
<keyword id="KW-0694">RNA-binding</keyword>
<keyword id="KW-0699">rRNA-binding</keyword>
<accession>A9BRW4</accession>
<reference key="1">
    <citation type="submission" date="2007-11" db="EMBL/GenBank/DDBJ databases">
        <title>Complete sequence of Delftia acidovorans DSM 14801 / SPH-1.</title>
        <authorList>
            <person name="Copeland A."/>
            <person name="Lucas S."/>
            <person name="Lapidus A."/>
            <person name="Barry K."/>
            <person name="Glavina del Rio T."/>
            <person name="Dalin E."/>
            <person name="Tice H."/>
            <person name="Pitluck S."/>
            <person name="Lowry S."/>
            <person name="Clum A."/>
            <person name="Schmutz J."/>
            <person name="Larimer F."/>
            <person name="Land M."/>
            <person name="Hauser L."/>
            <person name="Kyrpides N."/>
            <person name="Kim E."/>
            <person name="Schleheck D."/>
            <person name="Richardson P."/>
        </authorList>
    </citation>
    <scope>NUCLEOTIDE SEQUENCE [LARGE SCALE GENOMIC DNA]</scope>
    <source>
        <strain>DSM 14801 / SPH-1</strain>
    </source>
</reference>
<dbReference type="EMBL" id="CP000884">
    <property type="protein sequence ID" value="ABX33681.1"/>
    <property type="molecule type" value="Genomic_DNA"/>
</dbReference>
<dbReference type="RefSeq" id="WP_012202967.1">
    <property type="nucleotide sequence ID" value="NC_010002.1"/>
</dbReference>
<dbReference type="SMR" id="A9BRW4"/>
<dbReference type="STRING" id="398578.Daci_1035"/>
<dbReference type="GeneID" id="94695192"/>
<dbReference type="KEGG" id="dac:Daci_1035"/>
<dbReference type="eggNOG" id="COG0199">
    <property type="taxonomic scope" value="Bacteria"/>
</dbReference>
<dbReference type="HOGENOM" id="CLU_139869_0_1_4"/>
<dbReference type="Proteomes" id="UP000000784">
    <property type="component" value="Chromosome"/>
</dbReference>
<dbReference type="GO" id="GO:0005737">
    <property type="term" value="C:cytoplasm"/>
    <property type="evidence" value="ECO:0007669"/>
    <property type="project" value="UniProtKB-ARBA"/>
</dbReference>
<dbReference type="GO" id="GO:0015935">
    <property type="term" value="C:small ribosomal subunit"/>
    <property type="evidence" value="ECO:0007669"/>
    <property type="project" value="TreeGrafter"/>
</dbReference>
<dbReference type="GO" id="GO:0019843">
    <property type="term" value="F:rRNA binding"/>
    <property type="evidence" value="ECO:0007669"/>
    <property type="project" value="UniProtKB-UniRule"/>
</dbReference>
<dbReference type="GO" id="GO:0003735">
    <property type="term" value="F:structural constituent of ribosome"/>
    <property type="evidence" value="ECO:0007669"/>
    <property type="project" value="InterPro"/>
</dbReference>
<dbReference type="GO" id="GO:0006412">
    <property type="term" value="P:translation"/>
    <property type="evidence" value="ECO:0007669"/>
    <property type="project" value="UniProtKB-UniRule"/>
</dbReference>
<dbReference type="FunFam" id="1.10.287.1480:FF:000001">
    <property type="entry name" value="30S ribosomal protein S14"/>
    <property type="match status" value="1"/>
</dbReference>
<dbReference type="Gene3D" id="1.10.287.1480">
    <property type="match status" value="1"/>
</dbReference>
<dbReference type="HAMAP" id="MF_00537">
    <property type="entry name" value="Ribosomal_uS14_1"/>
    <property type="match status" value="1"/>
</dbReference>
<dbReference type="InterPro" id="IPR001209">
    <property type="entry name" value="Ribosomal_uS14"/>
</dbReference>
<dbReference type="InterPro" id="IPR023036">
    <property type="entry name" value="Ribosomal_uS14_bac/plastid"/>
</dbReference>
<dbReference type="NCBIfam" id="NF006477">
    <property type="entry name" value="PRK08881.1"/>
    <property type="match status" value="1"/>
</dbReference>
<dbReference type="PANTHER" id="PTHR19836">
    <property type="entry name" value="30S RIBOSOMAL PROTEIN S14"/>
    <property type="match status" value="1"/>
</dbReference>
<dbReference type="PANTHER" id="PTHR19836:SF19">
    <property type="entry name" value="SMALL RIBOSOMAL SUBUNIT PROTEIN US14M"/>
    <property type="match status" value="1"/>
</dbReference>
<dbReference type="Pfam" id="PF00253">
    <property type="entry name" value="Ribosomal_S14"/>
    <property type="match status" value="1"/>
</dbReference>
<dbReference type="SUPFAM" id="SSF57716">
    <property type="entry name" value="Glucocorticoid receptor-like (DNA-binding domain)"/>
    <property type="match status" value="1"/>
</dbReference>
<sequence>MAKVALIQRELKREKLAAKYAAKYAELKAIAADAKRSDEERDAARLGLQKLPRNANPTRQRNRCEITGRPRGTFRQFGLGRAKIRELAFAGDIPGVTKASW</sequence>
<gene>
    <name evidence="1" type="primary">rpsN</name>
    <name type="ordered locus">Daci_1035</name>
</gene>
<comment type="function">
    <text evidence="1">Binds 16S rRNA, required for the assembly of 30S particles and may also be responsible for determining the conformation of the 16S rRNA at the A site.</text>
</comment>
<comment type="subunit">
    <text evidence="1">Part of the 30S ribosomal subunit. Contacts proteins S3 and S10.</text>
</comment>
<comment type="similarity">
    <text evidence="1">Belongs to the universal ribosomal protein uS14 family.</text>
</comment>
<protein>
    <recommendedName>
        <fullName evidence="1">Small ribosomal subunit protein uS14</fullName>
    </recommendedName>
    <alternativeName>
        <fullName evidence="2">30S ribosomal protein S14</fullName>
    </alternativeName>
</protein>
<organism>
    <name type="scientific">Delftia acidovorans (strain DSM 14801 / SPH-1)</name>
    <dbReference type="NCBI Taxonomy" id="398578"/>
    <lineage>
        <taxon>Bacteria</taxon>
        <taxon>Pseudomonadati</taxon>
        <taxon>Pseudomonadota</taxon>
        <taxon>Betaproteobacteria</taxon>
        <taxon>Burkholderiales</taxon>
        <taxon>Comamonadaceae</taxon>
        <taxon>Delftia</taxon>
    </lineage>
</organism>
<proteinExistence type="inferred from homology"/>
<evidence type="ECO:0000255" key="1">
    <source>
        <dbReference type="HAMAP-Rule" id="MF_00537"/>
    </source>
</evidence>
<evidence type="ECO:0000305" key="2"/>